<protein>
    <recommendedName>
        <fullName>Uncharacterized membrane protein SPy_0358/M5005_Spy0301</fullName>
    </recommendedName>
</protein>
<comment type="subcellular location">
    <subcellularLocation>
        <location evidence="2">Cell membrane</location>
        <topology evidence="2">Multi-pass membrane protein</topology>
    </subcellularLocation>
</comment>
<comment type="similarity">
    <text evidence="2">Belongs to the BI1 family.</text>
</comment>
<evidence type="ECO:0000255" key="1"/>
<evidence type="ECO:0000305" key="2"/>
<name>Y358_STRP1</name>
<proteinExistence type="inferred from homology"/>
<gene>
    <name type="ordered locus">SPy_0358</name>
    <name type="ordered locus">M5005_Spy0301</name>
</gene>
<accession>Q9A1B9</accession>
<accession>Q490P8</accession>
<sequence>MNDHVIYTQSDVGLNQFFAKIYSLVGMGVGLSAFVSYLMLYPFRENLISILVNQPMIYYGAAIIELILVFVASSAARKNTPAALPIFLIYSALNGFTLSFIIVAYAQTTVFQAFLSSAAVFFAMSIIGVKTKRDMSGLRKAMFAALIGVVVASLINLFIGSGMMSYVISVISVLIFSGLIASDNQMIKRVYQATNGQVGDGWAVAMALSLYLDFINLFISLLRIFGRND</sequence>
<feature type="chain" id="PRO_0000179113" description="Uncharacterized membrane protein SPy_0358/M5005_Spy0301">
    <location>
        <begin position="1"/>
        <end position="229"/>
    </location>
</feature>
<feature type="transmembrane region" description="Helical" evidence="1">
    <location>
        <begin position="21"/>
        <end position="41"/>
    </location>
</feature>
<feature type="transmembrane region" description="Helical" evidence="1">
    <location>
        <begin position="56"/>
        <end position="76"/>
    </location>
</feature>
<feature type="transmembrane region" description="Helical" evidence="1">
    <location>
        <begin position="83"/>
        <end position="103"/>
    </location>
</feature>
<feature type="transmembrane region" description="Helical" evidence="1">
    <location>
        <begin position="109"/>
        <end position="129"/>
    </location>
</feature>
<feature type="transmembrane region" description="Helical" evidence="1">
    <location>
        <begin position="141"/>
        <end position="161"/>
    </location>
</feature>
<feature type="transmembrane region" description="Helical" evidence="1">
    <location>
        <begin position="162"/>
        <end position="182"/>
    </location>
</feature>
<feature type="transmembrane region" description="Helical" evidence="1">
    <location>
        <begin position="202"/>
        <end position="222"/>
    </location>
</feature>
<dbReference type="EMBL" id="AE004092">
    <property type="protein sequence ID" value="AAK33404.1"/>
    <property type="molecule type" value="Genomic_DNA"/>
</dbReference>
<dbReference type="EMBL" id="CP000017">
    <property type="protein sequence ID" value="AAZ50920.1"/>
    <property type="molecule type" value="Genomic_DNA"/>
</dbReference>
<dbReference type="RefSeq" id="NP_268683.1">
    <property type="nucleotide sequence ID" value="NC_002737.2"/>
</dbReference>
<dbReference type="SMR" id="Q9A1B9"/>
<dbReference type="PaxDb" id="1314-HKU360_00337"/>
<dbReference type="KEGG" id="spy:SPy_0358"/>
<dbReference type="KEGG" id="spz:M5005_Spy0301"/>
<dbReference type="PATRIC" id="fig|160490.10.peg.309"/>
<dbReference type="HOGENOM" id="CLU_058671_1_2_9"/>
<dbReference type="OMA" id="FGVMSLY"/>
<dbReference type="Proteomes" id="UP000000750">
    <property type="component" value="Chromosome"/>
</dbReference>
<dbReference type="GO" id="GO:0005886">
    <property type="term" value="C:plasma membrane"/>
    <property type="evidence" value="ECO:0007669"/>
    <property type="project" value="UniProtKB-SubCell"/>
</dbReference>
<dbReference type="CDD" id="cd10432">
    <property type="entry name" value="BI-1-like_bacterial"/>
    <property type="match status" value="1"/>
</dbReference>
<dbReference type="InterPro" id="IPR006214">
    <property type="entry name" value="Bax_inhibitor_1-related"/>
</dbReference>
<dbReference type="PANTHER" id="PTHR23291">
    <property type="entry name" value="BAX INHIBITOR-RELATED"/>
    <property type="match status" value="1"/>
</dbReference>
<dbReference type="PANTHER" id="PTHR23291:SF50">
    <property type="entry name" value="PROTEIN LIFEGUARD 4"/>
    <property type="match status" value="1"/>
</dbReference>
<dbReference type="Pfam" id="PF01027">
    <property type="entry name" value="Bax1-I"/>
    <property type="match status" value="1"/>
</dbReference>
<organism>
    <name type="scientific">Streptococcus pyogenes serotype M1</name>
    <dbReference type="NCBI Taxonomy" id="301447"/>
    <lineage>
        <taxon>Bacteria</taxon>
        <taxon>Bacillati</taxon>
        <taxon>Bacillota</taxon>
        <taxon>Bacilli</taxon>
        <taxon>Lactobacillales</taxon>
        <taxon>Streptococcaceae</taxon>
        <taxon>Streptococcus</taxon>
    </lineage>
</organism>
<reference key="1">
    <citation type="journal article" date="2001" name="Proc. Natl. Acad. Sci. U.S.A.">
        <title>Complete genome sequence of an M1 strain of Streptococcus pyogenes.</title>
        <authorList>
            <person name="Ferretti J.J."/>
            <person name="McShan W.M."/>
            <person name="Ajdic D.J."/>
            <person name="Savic D.J."/>
            <person name="Savic G."/>
            <person name="Lyon K."/>
            <person name="Primeaux C."/>
            <person name="Sezate S."/>
            <person name="Suvorov A.N."/>
            <person name="Kenton S."/>
            <person name="Lai H.S."/>
            <person name="Lin S.P."/>
            <person name="Qian Y."/>
            <person name="Jia H.G."/>
            <person name="Najar F.Z."/>
            <person name="Ren Q."/>
            <person name="Zhu H."/>
            <person name="Song L."/>
            <person name="White J."/>
            <person name="Yuan X."/>
            <person name="Clifton S.W."/>
            <person name="Roe B.A."/>
            <person name="McLaughlin R.E."/>
        </authorList>
    </citation>
    <scope>NUCLEOTIDE SEQUENCE [LARGE SCALE GENOMIC DNA]</scope>
    <source>
        <strain>ATCC 700294 / SF370 / Serotype M1</strain>
    </source>
</reference>
<reference key="2">
    <citation type="journal article" date="2005" name="J. Infect. Dis.">
        <title>Evolutionary origin and emergence of a highly successful clone of serotype M1 group A Streptococcus involved multiple horizontal gene transfer events.</title>
        <authorList>
            <person name="Sumby P."/>
            <person name="Porcella S.F."/>
            <person name="Madrigal A.G."/>
            <person name="Barbian K.D."/>
            <person name="Virtaneva K."/>
            <person name="Ricklefs S.M."/>
            <person name="Sturdevant D.E."/>
            <person name="Graham M.R."/>
            <person name="Vuopio-Varkila J."/>
            <person name="Hoe N.P."/>
            <person name="Musser J.M."/>
        </authorList>
    </citation>
    <scope>NUCLEOTIDE SEQUENCE [LARGE SCALE GENOMIC DNA]</scope>
    <source>
        <strain>ATCC BAA-947 / MGAS5005 / Serotype M1</strain>
    </source>
</reference>
<keyword id="KW-1003">Cell membrane</keyword>
<keyword id="KW-0472">Membrane</keyword>
<keyword id="KW-1185">Reference proteome</keyword>
<keyword id="KW-0812">Transmembrane</keyword>
<keyword id="KW-1133">Transmembrane helix</keyword>